<evidence type="ECO:0000255" key="1">
    <source>
        <dbReference type="HAMAP-Rule" id="MF_00122"/>
    </source>
</evidence>
<dbReference type="EC" id="6.3.5.-" evidence="1"/>
<dbReference type="EMBL" id="CP001635">
    <property type="protein sequence ID" value="ACS16945.1"/>
    <property type="molecule type" value="Genomic_DNA"/>
</dbReference>
<dbReference type="SMR" id="C5CY41"/>
<dbReference type="STRING" id="543728.Vapar_0282"/>
<dbReference type="KEGG" id="vap:Vapar_0282"/>
<dbReference type="eggNOG" id="COG0721">
    <property type="taxonomic scope" value="Bacteria"/>
</dbReference>
<dbReference type="HOGENOM" id="CLU_105899_2_2_4"/>
<dbReference type="OrthoDB" id="9794326at2"/>
<dbReference type="GO" id="GO:0050566">
    <property type="term" value="F:asparaginyl-tRNA synthase (glutamine-hydrolyzing) activity"/>
    <property type="evidence" value="ECO:0007669"/>
    <property type="project" value="RHEA"/>
</dbReference>
<dbReference type="GO" id="GO:0005524">
    <property type="term" value="F:ATP binding"/>
    <property type="evidence" value="ECO:0007669"/>
    <property type="project" value="UniProtKB-KW"/>
</dbReference>
<dbReference type="GO" id="GO:0050567">
    <property type="term" value="F:glutaminyl-tRNA synthase (glutamine-hydrolyzing) activity"/>
    <property type="evidence" value="ECO:0007669"/>
    <property type="project" value="UniProtKB-UniRule"/>
</dbReference>
<dbReference type="GO" id="GO:0070681">
    <property type="term" value="P:glutaminyl-tRNAGln biosynthesis via transamidation"/>
    <property type="evidence" value="ECO:0007669"/>
    <property type="project" value="TreeGrafter"/>
</dbReference>
<dbReference type="GO" id="GO:0006450">
    <property type="term" value="P:regulation of translational fidelity"/>
    <property type="evidence" value="ECO:0007669"/>
    <property type="project" value="InterPro"/>
</dbReference>
<dbReference type="GO" id="GO:0006412">
    <property type="term" value="P:translation"/>
    <property type="evidence" value="ECO:0007669"/>
    <property type="project" value="UniProtKB-UniRule"/>
</dbReference>
<dbReference type="Gene3D" id="1.10.20.60">
    <property type="entry name" value="Glu-tRNAGln amidotransferase C subunit, N-terminal domain"/>
    <property type="match status" value="1"/>
</dbReference>
<dbReference type="HAMAP" id="MF_00122">
    <property type="entry name" value="GatC"/>
    <property type="match status" value="1"/>
</dbReference>
<dbReference type="InterPro" id="IPR036113">
    <property type="entry name" value="Asp/Glu-ADT_sf_sub_c"/>
</dbReference>
<dbReference type="InterPro" id="IPR003837">
    <property type="entry name" value="GatC"/>
</dbReference>
<dbReference type="NCBIfam" id="TIGR00135">
    <property type="entry name" value="gatC"/>
    <property type="match status" value="1"/>
</dbReference>
<dbReference type="PANTHER" id="PTHR15004">
    <property type="entry name" value="GLUTAMYL-TRNA(GLN) AMIDOTRANSFERASE SUBUNIT C, MITOCHONDRIAL"/>
    <property type="match status" value="1"/>
</dbReference>
<dbReference type="PANTHER" id="PTHR15004:SF0">
    <property type="entry name" value="GLUTAMYL-TRNA(GLN) AMIDOTRANSFERASE SUBUNIT C, MITOCHONDRIAL"/>
    <property type="match status" value="1"/>
</dbReference>
<dbReference type="Pfam" id="PF02686">
    <property type="entry name" value="GatC"/>
    <property type="match status" value="1"/>
</dbReference>
<dbReference type="SUPFAM" id="SSF141000">
    <property type="entry name" value="Glu-tRNAGln amidotransferase C subunit"/>
    <property type="match status" value="1"/>
</dbReference>
<accession>C5CY41</accession>
<sequence length="99" mass="10733">MSLSASDIARIASLARLQLASDESERMLSQINGFFDLVERMRSVDTAGVEPLAHPVAAVEDITLRLRDDVASEPDNREANQKSAPAVEAGLFLVPKVIE</sequence>
<gene>
    <name evidence="1" type="primary">gatC</name>
    <name type="ordered locus">Vapar_0282</name>
</gene>
<proteinExistence type="inferred from homology"/>
<comment type="function">
    <text evidence="1">Allows the formation of correctly charged Asn-tRNA(Asn) or Gln-tRNA(Gln) through the transamidation of misacylated Asp-tRNA(Asn) or Glu-tRNA(Gln) in organisms which lack either or both of asparaginyl-tRNA or glutaminyl-tRNA synthetases. The reaction takes place in the presence of glutamine and ATP through an activated phospho-Asp-tRNA(Asn) or phospho-Glu-tRNA(Gln).</text>
</comment>
<comment type="catalytic activity">
    <reaction evidence="1">
        <text>L-glutamyl-tRNA(Gln) + L-glutamine + ATP + H2O = L-glutaminyl-tRNA(Gln) + L-glutamate + ADP + phosphate + H(+)</text>
        <dbReference type="Rhea" id="RHEA:17521"/>
        <dbReference type="Rhea" id="RHEA-COMP:9681"/>
        <dbReference type="Rhea" id="RHEA-COMP:9684"/>
        <dbReference type="ChEBI" id="CHEBI:15377"/>
        <dbReference type="ChEBI" id="CHEBI:15378"/>
        <dbReference type="ChEBI" id="CHEBI:29985"/>
        <dbReference type="ChEBI" id="CHEBI:30616"/>
        <dbReference type="ChEBI" id="CHEBI:43474"/>
        <dbReference type="ChEBI" id="CHEBI:58359"/>
        <dbReference type="ChEBI" id="CHEBI:78520"/>
        <dbReference type="ChEBI" id="CHEBI:78521"/>
        <dbReference type="ChEBI" id="CHEBI:456216"/>
    </reaction>
</comment>
<comment type="catalytic activity">
    <reaction evidence="1">
        <text>L-aspartyl-tRNA(Asn) + L-glutamine + ATP + H2O = L-asparaginyl-tRNA(Asn) + L-glutamate + ADP + phosphate + 2 H(+)</text>
        <dbReference type="Rhea" id="RHEA:14513"/>
        <dbReference type="Rhea" id="RHEA-COMP:9674"/>
        <dbReference type="Rhea" id="RHEA-COMP:9677"/>
        <dbReference type="ChEBI" id="CHEBI:15377"/>
        <dbReference type="ChEBI" id="CHEBI:15378"/>
        <dbReference type="ChEBI" id="CHEBI:29985"/>
        <dbReference type="ChEBI" id="CHEBI:30616"/>
        <dbReference type="ChEBI" id="CHEBI:43474"/>
        <dbReference type="ChEBI" id="CHEBI:58359"/>
        <dbReference type="ChEBI" id="CHEBI:78515"/>
        <dbReference type="ChEBI" id="CHEBI:78516"/>
        <dbReference type="ChEBI" id="CHEBI:456216"/>
    </reaction>
</comment>
<comment type="subunit">
    <text evidence="1">Heterotrimer of A, B and C subunits.</text>
</comment>
<comment type="similarity">
    <text evidence="1">Belongs to the GatC family.</text>
</comment>
<feature type="chain" id="PRO_1000203086" description="Aspartyl/glutamyl-tRNA(Asn/Gln) amidotransferase subunit C">
    <location>
        <begin position="1"/>
        <end position="99"/>
    </location>
</feature>
<name>GATC_VARPS</name>
<reference key="1">
    <citation type="journal article" date="2011" name="J. Bacteriol.">
        <title>Complete genome sequence of the metabolically versatile plant growth-promoting endophyte, Variovorax paradoxus S110.</title>
        <authorList>
            <person name="Han J.I."/>
            <person name="Choi H.K."/>
            <person name="Lee S.W."/>
            <person name="Orwin P.M."/>
            <person name="Kim J."/>
            <person name="Laroe S.L."/>
            <person name="Kim T.G."/>
            <person name="O'Neil J."/>
            <person name="Leadbetter J.R."/>
            <person name="Lee S.Y."/>
            <person name="Hur C.G."/>
            <person name="Spain J.C."/>
            <person name="Ovchinnikova G."/>
            <person name="Goodwin L."/>
            <person name="Han C."/>
        </authorList>
    </citation>
    <scope>NUCLEOTIDE SEQUENCE [LARGE SCALE GENOMIC DNA]</scope>
    <source>
        <strain>S110</strain>
    </source>
</reference>
<organism>
    <name type="scientific">Variovorax paradoxus (strain S110)</name>
    <dbReference type="NCBI Taxonomy" id="543728"/>
    <lineage>
        <taxon>Bacteria</taxon>
        <taxon>Pseudomonadati</taxon>
        <taxon>Pseudomonadota</taxon>
        <taxon>Betaproteobacteria</taxon>
        <taxon>Burkholderiales</taxon>
        <taxon>Comamonadaceae</taxon>
        <taxon>Variovorax</taxon>
    </lineage>
</organism>
<protein>
    <recommendedName>
        <fullName evidence="1">Aspartyl/glutamyl-tRNA(Asn/Gln) amidotransferase subunit C</fullName>
        <shortName evidence="1">Asp/Glu-ADT subunit C</shortName>
        <ecNumber evidence="1">6.3.5.-</ecNumber>
    </recommendedName>
</protein>
<keyword id="KW-0067">ATP-binding</keyword>
<keyword id="KW-0436">Ligase</keyword>
<keyword id="KW-0547">Nucleotide-binding</keyword>
<keyword id="KW-0648">Protein biosynthesis</keyword>